<keyword id="KW-0067">ATP-binding</keyword>
<keyword id="KW-0414">Isoprene biosynthesis</keyword>
<keyword id="KW-0418">Kinase</keyword>
<keyword id="KW-0547">Nucleotide-binding</keyword>
<keyword id="KW-0808">Transferase</keyword>
<comment type="function">
    <text evidence="1">Catalyzes the phosphorylation of the position 2 hydroxy group of 4-diphosphocytidyl-2C-methyl-D-erythritol.</text>
</comment>
<comment type="catalytic activity">
    <reaction evidence="1">
        <text>4-CDP-2-C-methyl-D-erythritol + ATP = 4-CDP-2-C-methyl-D-erythritol 2-phosphate + ADP + H(+)</text>
        <dbReference type="Rhea" id="RHEA:18437"/>
        <dbReference type="ChEBI" id="CHEBI:15378"/>
        <dbReference type="ChEBI" id="CHEBI:30616"/>
        <dbReference type="ChEBI" id="CHEBI:57823"/>
        <dbReference type="ChEBI" id="CHEBI:57919"/>
        <dbReference type="ChEBI" id="CHEBI:456216"/>
        <dbReference type="EC" id="2.7.1.148"/>
    </reaction>
</comment>
<comment type="pathway">
    <text evidence="1">Isoprenoid biosynthesis; isopentenyl diphosphate biosynthesis via DXP pathway; isopentenyl diphosphate from 1-deoxy-D-xylulose 5-phosphate: step 3/6.</text>
</comment>
<comment type="similarity">
    <text evidence="1">Belongs to the GHMP kinase family. IspE subfamily.</text>
</comment>
<dbReference type="EC" id="2.7.1.148" evidence="1"/>
<dbReference type="EMBL" id="AE014291">
    <property type="protein sequence ID" value="AAN29340.1"/>
    <property type="molecule type" value="Genomic_DNA"/>
</dbReference>
<dbReference type="EMBL" id="CP002997">
    <property type="protein sequence ID" value="AEM17753.1"/>
    <property type="molecule type" value="Genomic_DNA"/>
</dbReference>
<dbReference type="RefSeq" id="WP_002963553.1">
    <property type="nucleotide sequence ID" value="NZ_KN046804.1"/>
</dbReference>
<dbReference type="SMR" id="Q8G2D0"/>
<dbReference type="KEGG" id="bms:BR0394"/>
<dbReference type="KEGG" id="bsi:BS1330_I0395"/>
<dbReference type="PATRIC" id="fig|204722.22.peg.1448"/>
<dbReference type="HOGENOM" id="CLU_053057_1_0_5"/>
<dbReference type="PhylomeDB" id="Q8G2D0"/>
<dbReference type="UniPathway" id="UPA00056">
    <property type="reaction ID" value="UER00094"/>
</dbReference>
<dbReference type="Proteomes" id="UP000007104">
    <property type="component" value="Chromosome I"/>
</dbReference>
<dbReference type="GO" id="GO:0050515">
    <property type="term" value="F:4-(cytidine 5'-diphospho)-2-C-methyl-D-erythritol kinase activity"/>
    <property type="evidence" value="ECO:0007669"/>
    <property type="project" value="UniProtKB-UniRule"/>
</dbReference>
<dbReference type="GO" id="GO:0005524">
    <property type="term" value="F:ATP binding"/>
    <property type="evidence" value="ECO:0007669"/>
    <property type="project" value="UniProtKB-UniRule"/>
</dbReference>
<dbReference type="GO" id="GO:0019288">
    <property type="term" value="P:isopentenyl diphosphate biosynthetic process, methylerythritol 4-phosphate pathway"/>
    <property type="evidence" value="ECO:0007669"/>
    <property type="project" value="UniProtKB-UniRule"/>
</dbReference>
<dbReference type="GO" id="GO:0016114">
    <property type="term" value="P:terpenoid biosynthetic process"/>
    <property type="evidence" value="ECO:0007669"/>
    <property type="project" value="InterPro"/>
</dbReference>
<dbReference type="Gene3D" id="3.30.230.10">
    <property type="match status" value="1"/>
</dbReference>
<dbReference type="Gene3D" id="3.30.70.890">
    <property type="entry name" value="GHMP kinase, C-terminal domain"/>
    <property type="match status" value="1"/>
</dbReference>
<dbReference type="HAMAP" id="MF_00061">
    <property type="entry name" value="IspE"/>
    <property type="match status" value="1"/>
</dbReference>
<dbReference type="InterPro" id="IPR013750">
    <property type="entry name" value="GHMP_kinase_C_dom"/>
</dbReference>
<dbReference type="InterPro" id="IPR036554">
    <property type="entry name" value="GHMP_kinase_C_sf"/>
</dbReference>
<dbReference type="InterPro" id="IPR006204">
    <property type="entry name" value="GHMP_kinase_N_dom"/>
</dbReference>
<dbReference type="InterPro" id="IPR004424">
    <property type="entry name" value="IspE"/>
</dbReference>
<dbReference type="InterPro" id="IPR020568">
    <property type="entry name" value="Ribosomal_Su5_D2-typ_SF"/>
</dbReference>
<dbReference type="InterPro" id="IPR014721">
    <property type="entry name" value="Ribsml_uS5_D2-typ_fold_subgr"/>
</dbReference>
<dbReference type="NCBIfam" id="TIGR00154">
    <property type="entry name" value="ispE"/>
    <property type="match status" value="1"/>
</dbReference>
<dbReference type="NCBIfam" id="NF011202">
    <property type="entry name" value="PRK14608.1"/>
    <property type="match status" value="1"/>
</dbReference>
<dbReference type="PANTHER" id="PTHR43527">
    <property type="entry name" value="4-DIPHOSPHOCYTIDYL-2-C-METHYL-D-ERYTHRITOL KINASE, CHLOROPLASTIC"/>
    <property type="match status" value="1"/>
</dbReference>
<dbReference type="PANTHER" id="PTHR43527:SF2">
    <property type="entry name" value="4-DIPHOSPHOCYTIDYL-2-C-METHYL-D-ERYTHRITOL KINASE, CHLOROPLASTIC"/>
    <property type="match status" value="1"/>
</dbReference>
<dbReference type="Pfam" id="PF08544">
    <property type="entry name" value="GHMP_kinases_C"/>
    <property type="match status" value="1"/>
</dbReference>
<dbReference type="Pfam" id="PF00288">
    <property type="entry name" value="GHMP_kinases_N"/>
    <property type="match status" value="1"/>
</dbReference>
<dbReference type="PIRSF" id="PIRSF010376">
    <property type="entry name" value="IspE"/>
    <property type="match status" value="1"/>
</dbReference>
<dbReference type="SUPFAM" id="SSF55060">
    <property type="entry name" value="GHMP Kinase, C-terminal domain"/>
    <property type="match status" value="1"/>
</dbReference>
<dbReference type="SUPFAM" id="SSF54211">
    <property type="entry name" value="Ribosomal protein S5 domain 2-like"/>
    <property type="match status" value="1"/>
</dbReference>
<protein>
    <recommendedName>
        <fullName evidence="1">4-diphosphocytidyl-2-C-methyl-D-erythritol kinase</fullName>
        <shortName evidence="1">CMK</shortName>
        <ecNumber evidence="1">2.7.1.148</ecNumber>
    </recommendedName>
    <alternativeName>
        <fullName evidence="1">4-(cytidine-5'-diphospho)-2-C-methyl-D-erythritol kinase</fullName>
    </alternativeName>
</protein>
<sequence>MTAFQNAGPSITRLAPAKINLALHVTGRRDDGYHLLDMLVVFADHGDRIHIEKAGSDSFTVSGPFASGIPAGRGNLVLKARDALRQHGGPDLSPVAIHLEKNLPIASGIGGGSSDAAATLLALNTLWQLDLDFEMLAAIGLSLGADLPMCLHGAAHGTPLIARGIGEELNDVSGIAALPMLLVNDGTALATPDVFRALTRRENAPLPPPACEGTDALCAYLRETRNDLLPAAISLAPQIEPKLALLRAKGALYAQMSGSGATCFAIFSDESALTRAAKEIADENPGWFAVPSHSFPSRA</sequence>
<name>ISPE_BRUSU</name>
<evidence type="ECO:0000255" key="1">
    <source>
        <dbReference type="HAMAP-Rule" id="MF_00061"/>
    </source>
</evidence>
<proteinExistence type="inferred from homology"/>
<organism>
    <name type="scientific">Brucella suis biovar 1 (strain 1330)</name>
    <dbReference type="NCBI Taxonomy" id="204722"/>
    <lineage>
        <taxon>Bacteria</taxon>
        <taxon>Pseudomonadati</taxon>
        <taxon>Pseudomonadota</taxon>
        <taxon>Alphaproteobacteria</taxon>
        <taxon>Hyphomicrobiales</taxon>
        <taxon>Brucellaceae</taxon>
        <taxon>Brucella/Ochrobactrum group</taxon>
        <taxon>Brucella</taxon>
    </lineage>
</organism>
<feature type="chain" id="PRO_0000189196" description="4-diphosphocytidyl-2-C-methyl-D-erythritol kinase">
    <location>
        <begin position="1"/>
        <end position="299"/>
    </location>
</feature>
<feature type="active site" evidence="1">
    <location>
        <position position="18"/>
    </location>
</feature>
<feature type="active site" evidence="1">
    <location>
        <position position="146"/>
    </location>
</feature>
<feature type="binding site" evidence="1">
    <location>
        <begin position="104"/>
        <end position="114"/>
    </location>
    <ligand>
        <name>ATP</name>
        <dbReference type="ChEBI" id="CHEBI:30616"/>
    </ligand>
</feature>
<accession>Q8G2D0</accession>
<accession>G0K6L6</accession>
<gene>
    <name evidence="1" type="primary">ispE</name>
    <name type="ordered locus">BR0394</name>
    <name type="ordered locus">BS1330_I0395</name>
</gene>
<reference key="1">
    <citation type="journal article" date="2002" name="Proc. Natl. Acad. Sci. U.S.A.">
        <title>The Brucella suis genome reveals fundamental similarities between animal and plant pathogens and symbionts.</title>
        <authorList>
            <person name="Paulsen I.T."/>
            <person name="Seshadri R."/>
            <person name="Nelson K.E."/>
            <person name="Eisen J.A."/>
            <person name="Heidelberg J.F."/>
            <person name="Read T.D."/>
            <person name="Dodson R.J."/>
            <person name="Umayam L.A."/>
            <person name="Brinkac L.M."/>
            <person name="Beanan M.J."/>
            <person name="Daugherty S.C."/>
            <person name="DeBoy R.T."/>
            <person name="Durkin A.S."/>
            <person name="Kolonay J.F."/>
            <person name="Madupu R."/>
            <person name="Nelson W.C."/>
            <person name="Ayodeji B."/>
            <person name="Kraul M."/>
            <person name="Shetty J."/>
            <person name="Malek J.A."/>
            <person name="Van Aken S.E."/>
            <person name="Riedmuller S."/>
            <person name="Tettelin H."/>
            <person name="Gill S.R."/>
            <person name="White O."/>
            <person name="Salzberg S.L."/>
            <person name="Hoover D.L."/>
            <person name="Lindler L.E."/>
            <person name="Halling S.M."/>
            <person name="Boyle S.M."/>
            <person name="Fraser C.M."/>
        </authorList>
    </citation>
    <scope>NUCLEOTIDE SEQUENCE [LARGE SCALE GENOMIC DNA]</scope>
    <source>
        <strain>1330</strain>
    </source>
</reference>
<reference key="2">
    <citation type="journal article" date="2011" name="J. Bacteriol.">
        <title>Revised genome sequence of Brucella suis 1330.</title>
        <authorList>
            <person name="Tae H."/>
            <person name="Shallom S."/>
            <person name="Settlage R."/>
            <person name="Preston D."/>
            <person name="Adams L.G."/>
            <person name="Garner H.R."/>
        </authorList>
    </citation>
    <scope>NUCLEOTIDE SEQUENCE [LARGE SCALE GENOMIC DNA]</scope>
    <source>
        <strain>1330</strain>
    </source>
</reference>